<keyword id="KW-0325">Glycoprotein</keyword>
<keyword id="KW-0494">Milk protein</keyword>
<keyword id="KW-0597">Phosphoprotein</keyword>
<keyword id="KW-0964">Secreted</keyword>
<keyword id="KW-0732">Signal</keyword>
<organism>
    <name type="scientific">Cervus nippon</name>
    <name type="common">Sika deer</name>
    <dbReference type="NCBI Taxonomy" id="9863"/>
    <lineage>
        <taxon>Eukaryota</taxon>
        <taxon>Metazoa</taxon>
        <taxon>Chordata</taxon>
        <taxon>Craniata</taxon>
        <taxon>Vertebrata</taxon>
        <taxon>Euteleostomi</taxon>
        <taxon>Mammalia</taxon>
        <taxon>Eutheria</taxon>
        <taxon>Laurasiatheria</taxon>
        <taxon>Artiodactyla</taxon>
        <taxon>Ruminantia</taxon>
        <taxon>Pecora</taxon>
        <taxon>Cervidae</taxon>
        <taxon>Cervinae</taxon>
        <taxon>Cervus</taxon>
    </lineage>
</organism>
<sequence length="190" mass="21378">MMKSFFLAVTILALTLPFLVAQEQIQEQPTGCEKDERFFNDKIVKYIPIQYALSRYPSYGLNYYQHRPVALINNQFLPYPYYVKPGAVRSPAQILQWQVLPNTVPAKFCQAQPTTMARHPHPRLSFMAIPPKKNQDKTDIPSINTIATAESTITPTTEAIVDTVATQEAFSEVIESAPEAKTDQVTSTVV</sequence>
<protein>
    <recommendedName>
        <fullName>Kappa-casein</fullName>
    </recommendedName>
</protein>
<reference key="1">
    <citation type="journal article" date="1995" name="J. Mol. Evol.">
        <title>Molecular phylogeny based on the kappa-casein and cytochrome b sequences in the mammalian suborder ruminantia.</title>
        <authorList>
            <person name="Chikuni K."/>
            <person name="Mori Y."/>
            <person name="Tabata T."/>
            <person name="Saito M."/>
            <person name="Monma M."/>
            <person name="Kosugiyama M."/>
        </authorList>
    </citation>
    <scope>NUCLEOTIDE SEQUENCE [GENOMIC DNA]</scope>
</reference>
<feature type="signal peptide" evidence="1">
    <location>
        <begin position="1"/>
        <end position="21"/>
    </location>
</feature>
<feature type="chain" id="PRO_0000004496" description="Kappa-casein">
    <location>
        <begin position="22"/>
        <end position="190"/>
    </location>
</feature>
<feature type="site" description="Cleavage; by chymosin/rennin" evidence="1">
    <location>
        <begin position="126"/>
        <end position="127"/>
    </location>
</feature>
<feature type="modified residue" description="Phosphothreonine" evidence="2">
    <location>
        <position position="166"/>
    </location>
</feature>
<feature type="modified residue" description="Phosphoserine" evidence="3">
    <location>
        <position position="187"/>
    </location>
</feature>
<feature type="glycosylation site" description="O-linked (GalNAc...) threonine" evidence="2">
    <location>
        <position position="152"/>
    </location>
</feature>
<feature type="glycosylation site" description="O-linked (GalNAc...) threonine" evidence="2">
    <location>
        <position position="154"/>
    </location>
</feature>
<feature type="glycosylation site" description="O-linked (GalNAc...) threonine" evidence="2">
    <location>
        <position position="157"/>
    </location>
</feature>
<feature type="glycosylation site" description="O-linked (GalNAc...) threonine" evidence="2">
    <location>
        <position position="163"/>
    </location>
</feature>
<feature type="glycosylation site" description="O-linked (GalNAc...) threonine" evidence="2">
    <location>
        <position position="186"/>
    </location>
</feature>
<dbReference type="EMBL" id="D14379">
    <property type="protein sequence ID" value="BAA03288.1"/>
    <property type="molecule type" value="Genomic_DNA"/>
</dbReference>
<dbReference type="GlyCosmos" id="P42157">
    <property type="glycosylation" value="5 sites, No reported glycans"/>
</dbReference>
<dbReference type="GO" id="GO:0005615">
    <property type="term" value="C:extracellular space"/>
    <property type="evidence" value="ECO:0007669"/>
    <property type="project" value="TreeGrafter"/>
</dbReference>
<dbReference type="GO" id="GO:0007595">
    <property type="term" value="P:lactation"/>
    <property type="evidence" value="ECO:0007669"/>
    <property type="project" value="TreeGrafter"/>
</dbReference>
<dbReference type="GO" id="GO:0050821">
    <property type="term" value="P:protein stabilization"/>
    <property type="evidence" value="ECO:0007669"/>
    <property type="project" value="TreeGrafter"/>
</dbReference>
<dbReference type="InterPro" id="IPR000117">
    <property type="entry name" value="Casein_kappa"/>
</dbReference>
<dbReference type="PANTHER" id="PTHR11470">
    <property type="entry name" value="KAPPA CASEIN"/>
    <property type="match status" value="1"/>
</dbReference>
<dbReference type="PANTHER" id="PTHR11470:SF2">
    <property type="entry name" value="KAPPA-CASEIN"/>
    <property type="match status" value="1"/>
</dbReference>
<dbReference type="Pfam" id="PF00997">
    <property type="entry name" value="Casein_kappa"/>
    <property type="match status" value="1"/>
</dbReference>
<dbReference type="PIRSF" id="PIRSF002374">
    <property type="entry name" value="Casein_kappa"/>
    <property type="match status" value="1"/>
</dbReference>
<evidence type="ECO:0000250" key="1"/>
<evidence type="ECO:0000250" key="2">
    <source>
        <dbReference type="UniProtKB" id="P02668"/>
    </source>
</evidence>
<evidence type="ECO:0000250" key="3">
    <source>
        <dbReference type="UniProtKB" id="P02670"/>
    </source>
</evidence>
<evidence type="ECO:0000305" key="4"/>
<proteinExistence type="evidence at transcript level"/>
<gene>
    <name type="primary">CSN3</name>
    <name type="synonym">CSN10</name>
    <name type="synonym">CSNK</name>
</gene>
<accession>P42157</accession>
<comment type="function">
    <text>Kappa-casein stabilizes micelle formation, preventing casein precipitation in milk.</text>
</comment>
<comment type="subcellular location">
    <subcellularLocation>
        <location>Secreted</location>
    </subcellularLocation>
</comment>
<comment type="tissue specificity">
    <text>Mammary gland specific. Secreted in milk.</text>
</comment>
<comment type="similarity">
    <text evidence="4">Belongs to the kappa-casein family.</text>
</comment>
<name>CASK_CERNI</name>